<evidence type="ECO:0000250" key="1"/>
<evidence type="ECO:0000250" key="2">
    <source>
        <dbReference type="UniProtKB" id="P14418"/>
    </source>
</evidence>
<evidence type="ECO:0000250" key="3">
    <source>
        <dbReference type="UniProtKB" id="P59071"/>
    </source>
</evidence>
<evidence type="ECO:0000255" key="4">
    <source>
        <dbReference type="PROSITE-ProRule" id="PRU10035"/>
    </source>
</evidence>
<evidence type="ECO:0000255" key="5">
    <source>
        <dbReference type="PROSITE-ProRule" id="PRU10036"/>
    </source>
</evidence>
<evidence type="ECO:0000269" key="6">
    <source>
    </source>
</evidence>
<evidence type="ECO:0000269" key="7">
    <source>
    </source>
</evidence>
<evidence type="ECO:0000303" key="8">
    <source>
    </source>
</evidence>
<evidence type="ECO:0000303" key="9">
    <source>
    </source>
</evidence>
<evidence type="ECO:0000305" key="10"/>
<evidence type="ECO:0000305" key="11">
    <source>
    </source>
</evidence>
<reference key="1">
    <citation type="journal article" date="2011" name="Toxicon">
        <title>cDNA cloning, structural, and functional analyses of venom phospholipases A and a Kunitz-type protease inhibitor from steppe viper Vipera ursinii renardi.</title>
        <authorList>
            <person name="Tsai I.-H."/>
            <person name="Wang Y.M."/>
            <person name="Cheng A.C."/>
            <person name="Starkov V."/>
            <person name="Osipov A."/>
            <person name="Nikitin I."/>
            <person name="Makarova Y."/>
            <person name="Ziganshin R."/>
            <person name="Utkin Y."/>
        </authorList>
    </citation>
    <scope>NUCLEOTIDE SEQUENCE [MRNA]</scope>
    <scope>FUNCTION</scope>
    <scope>MASS SPECTROMETRY</scope>
    <scope>SUBCELLULAR LOCATION</scope>
    <source>
        <tissue>Venom</tissue>
        <tissue>Venom gland</tissue>
    </source>
</reference>
<reference key="2">
    <citation type="journal article" date="2014" name="PLoS ONE">
        <title>Inhibition of nicotinic acetylcholine receptors, a novel facet in the pleiotropic activities of snake venom phospholipases A2.</title>
        <authorList>
            <person name="Vulfius C.A."/>
            <person name="Kasheverov I.E."/>
            <person name="Starkov V.G."/>
            <person name="Osipov A.V."/>
            <person name="Andreeva T.V."/>
            <person name="Filkin S.Y."/>
            <person name="Gorbacheva E.V."/>
            <person name="Astashev M.E."/>
            <person name="Tsetlin V.I."/>
            <person name="Utkin Y.N."/>
        </authorList>
    </citation>
    <scope>FUNCTION</scope>
    <scope>CATALYTIC ACTIVITY</scope>
    <scope>BIOPHYSICOCHEMICAL PROPERTIES</scope>
    <scope>3D-STRUCTURE MODELING</scope>
    <source>
        <tissue>Venom</tissue>
    </source>
</reference>
<comment type="function">
    <text evidence="6 7">Snake venom phospholipase A2 that may have a strong anticoagulant activity (PubMed:21185324). Is able to suppress the acetylcholine (ACh)-evoked current mediated by alpha-7 (CHRNA7)-similar nAChRs in L.stagnalis neurons (IC(50)=10.5 uM) and to compete with alpha-bungarotoxin for binding to muscle- and alpha-7 neuronal nAChR types, as well as to AChBPs (PubMed:25522251). In inhibition of alpha-bungarotoxin binding, this toxin is mostly active against T.californica nAChR (IC(50)=0.26 uM), it is moderately active against human alpha-7 nAChR (IC(50)=14 uM), and is not active against L.stagnalis and A.californica AChBP (IC(50)&gt;30 uM) (PubMed:25522251).</text>
</comment>
<comment type="catalytic activity">
    <reaction evidence="4 5 7">
        <text>a 1,2-diacyl-sn-glycero-3-phosphocholine + H2O = a 1-acyl-sn-glycero-3-phosphocholine + a fatty acid + H(+)</text>
        <dbReference type="Rhea" id="RHEA:15801"/>
        <dbReference type="ChEBI" id="CHEBI:15377"/>
        <dbReference type="ChEBI" id="CHEBI:15378"/>
        <dbReference type="ChEBI" id="CHEBI:28868"/>
        <dbReference type="ChEBI" id="CHEBI:57643"/>
        <dbReference type="ChEBI" id="CHEBI:58168"/>
        <dbReference type="EC" id="3.1.1.4"/>
    </reaction>
</comment>
<comment type="cofactor">
    <cofactor evidence="1">
        <name>Ca(2+)</name>
        <dbReference type="ChEBI" id="CHEBI:29108"/>
    </cofactor>
    <text evidence="1">Binds 1 Ca(2+) ion.</text>
</comment>
<comment type="biophysicochemical properties">
    <kinetics>
        <Vmax evidence="7">0.7 mmol/min/umol enzyme</Vmax>
    </kinetics>
</comment>
<comment type="subcellular location">
    <subcellularLocation>
        <location evidence="6">Secreted</location>
    </subcellularLocation>
</comment>
<comment type="tissue specificity">
    <text evidence="11">Expressed by the venom gland.</text>
</comment>
<comment type="mass spectrometry"/>
<comment type="similarity">
    <text evidence="10">Belongs to the phospholipase A2 family. Group II subfamily. D49 sub-subfamily.</text>
</comment>
<organism>
    <name type="scientific">Vipera renardi</name>
    <name type="common">Steppe viper</name>
    <name type="synonym">Vipera ursinii renardi</name>
    <dbReference type="NCBI Taxonomy" id="927686"/>
    <lineage>
        <taxon>Eukaryota</taxon>
        <taxon>Metazoa</taxon>
        <taxon>Chordata</taxon>
        <taxon>Craniata</taxon>
        <taxon>Vertebrata</taxon>
        <taxon>Euteleostomi</taxon>
        <taxon>Lepidosauria</taxon>
        <taxon>Squamata</taxon>
        <taxon>Bifurcata</taxon>
        <taxon>Unidentata</taxon>
        <taxon>Episquamata</taxon>
        <taxon>Toxicofera</taxon>
        <taxon>Serpentes</taxon>
        <taxon>Colubroidea</taxon>
        <taxon>Viperidae</taxon>
        <taxon>Viperinae</taxon>
        <taxon>Vipera</taxon>
    </lineage>
</organism>
<name>PA2B_VIPRE</name>
<feature type="signal peptide" evidence="6">
    <location>
        <begin position="1"/>
        <end position="16"/>
    </location>
</feature>
<feature type="chain" id="PRO_0000419637" description="Basic phospholipase A2 vurtoxin" evidence="6">
    <location>
        <begin position="17"/>
        <end position="138"/>
    </location>
</feature>
<feature type="active site" evidence="2">
    <location>
        <position position="63"/>
    </location>
</feature>
<feature type="active site" evidence="2">
    <location>
        <position position="105"/>
    </location>
</feature>
<feature type="binding site" evidence="3">
    <location>
        <position position="43"/>
    </location>
    <ligand>
        <name>Ca(2+)</name>
        <dbReference type="ChEBI" id="CHEBI:29108"/>
    </ligand>
</feature>
<feature type="binding site" evidence="3">
    <location>
        <position position="45"/>
    </location>
    <ligand>
        <name>Ca(2+)</name>
        <dbReference type="ChEBI" id="CHEBI:29108"/>
    </ligand>
</feature>
<feature type="binding site" evidence="3">
    <location>
        <position position="47"/>
    </location>
    <ligand>
        <name>Ca(2+)</name>
        <dbReference type="ChEBI" id="CHEBI:29108"/>
    </ligand>
</feature>
<feature type="binding site" evidence="3">
    <location>
        <position position="64"/>
    </location>
    <ligand>
        <name>Ca(2+)</name>
        <dbReference type="ChEBI" id="CHEBI:29108"/>
    </ligand>
</feature>
<feature type="disulfide bond" evidence="3">
    <location>
        <begin position="42"/>
        <end position="131"/>
    </location>
</feature>
<feature type="disulfide bond" evidence="3">
    <location>
        <begin position="44"/>
        <end position="60"/>
    </location>
</feature>
<feature type="disulfide bond" evidence="3">
    <location>
        <begin position="59"/>
        <end position="111"/>
    </location>
</feature>
<feature type="disulfide bond" evidence="3">
    <location>
        <begin position="65"/>
        <end position="138"/>
    </location>
</feature>
<feature type="disulfide bond" evidence="3">
    <location>
        <begin position="66"/>
        <end position="104"/>
    </location>
</feature>
<feature type="disulfide bond" evidence="3">
    <location>
        <begin position="73"/>
        <end position="97"/>
    </location>
</feature>
<feature type="disulfide bond" evidence="3">
    <location>
        <begin position="91"/>
        <end position="102"/>
    </location>
</feature>
<proteinExistence type="evidence at protein level"/>
<keyword id="KW-0008">Acetylcholine receptor inhibiting toxin</keyword>
<keyword id="KW-1203">Blood coagulation cascade inhibiting toxin</keyword>
<keyword id="KW-1015">Disulfide bond</keyword>
<keyword id="KW-1199">Hemostasis impairing toxin</keyword>
<keyword id="KW-0378">Hydrolase</keyword>
<keyword id="KW-0442">Lipid degradation</keyword>
<keyword id="KW-0443">Lipid metabolism</keyword>
<keyword id="KW-0479">Metal-binding</keyword>
<keyword id="KW-0528">Neurotoxin</keyword>
<keyword id="KW-0629">Postsynaptic neurotoxin</keyword>
<keyword id="KW-0964">Secreted</keyword>
<keyword id="KW-0732">Signal</keyword>
<keyword id="KW-0800">Toxin</keyword>
<accession>F8QN54</accession>
<protein>
    <recommendedName>
        <fullName evidence="8 9">Basic phospholipase A2 vurtoxin</fullName>
        <shortName>svPLA2</shortName>
        <ecNumber evidence="7">3.1.1.4</ecNumber>
    </recommendedName>
    <alternativeName>
        <fullName>Phosphatidylcholine 2-acylhydrolase</fullName>
    </alternativeName>
</protein>
<sequence>MRTLWIVAVCLIGVEGSLLEFGMMILEETGKNPLTSYSFYGCYCGVGGKGTPKDATDRCCFVHDCCYGNLPDCNPKIDRYKYHRKNGAIVCGKGTSCENRICECDRAAAICFRKNLKTYNHIYKYYPDFLCKKESEKC</sequence>
<dbReference type="EC" id="3.1.1.4" evidence="7"/>
<dbReference type="EMBL" id="GQ304908">
    <property type="protein sequence ID" value="ADG86232.1"/>
    <property type="molecule type" value="mRNA"/>
</dbReference>
<dbReference type="SMR" id="F8QN54"/>
<dbReference type="GO" id="GO:0005576">
    <property type="term" value="C:extracellular region"/>
    <property type="evidence" value="ECO:0007669"/>
    <property type="project" value="UniProtKB-SubCell"/>
</dbReference>
<dbReference type="GO" id="GO:0030550">
    <property type="term" value="F:acetylcholine receptor inhibitor activity"/>
    <property type="evidence" value="ECO:0007669"/>
    <property type="project" value="UniProtKB-KW"/>
</dbReference>
<dbReference type="GO" id="GO:0005509">
    <property type="term" value="F:calcium ion binding"/>
    <property type="evidence" value="ECO:0007669"/>
    <property type="project" value="InterPro"/>
</dbReference>
<dbReference type="GO" id="GO:0047498">
    <property type="term" value="F:calcium-dependent phospholipase A2 activity"/>
    <property type="evidence" value="ECO:0007669"/>
    <property type="project" value="TreeGrafter"/>
</dbReference>
<dbReference type="GO" id="GO:0005543">
    <property type="term" value="F:phospholipid binding"/>
    <property type="evidence" value="ECO:0007669"/>
    <property type="project" value="TreeGrafter"/>
</dbReference>
<dbReference type="GO" id="GO:0090729">
    <property type="term" value="F:toxin activity"/>
    <property type="evidence" value="ECO:0007669"/>
    <property type="project" value="UniProtKB-KW"/>
</dbReference>
<dbReference type="GO" id="GO:0050482">
    <property type="term" value="P:arachidonate secretion"/>
    <property type="evidence" value="ECO:0007669"/>
    <property type="project" value="InterPro"/>
</dbReference>
<dbReference type="GO" id="GO:0016042">
    <property type="term" value="P:lipid catabolic process"/>
    <property type="evidence" value="ECO:0007669"/>
    <property type="project" value="UniProtKB-KW"/>
</dbReference>
<dbReference type="GO" id="GO:0042130">
    <property type="term" value="P:negative regulation of T cell proliferation"/>
    <property type="evidence" value="ECO:0007669"/>
    <property type="project" value="TreeGrafter"/>
</dbReference>
<dbReference type="GO" id="GO:0006644">
    <property type="term" value="P:phospholipid metabolic process"/>
    <property type="evidence" value="ECO:0007669"/>
    <property type="project" value="InterPro"/>
</dbReference>
<dbReference type="CDD" id="cd00125">
    <property type="entry name" value="PLA2c"/>
    <property type="match status" value="1"/>
</dbReference>
<dbReference type="FunFam" id="1.20.90.10:FF:000001">
    <property type="entry name" value="Basic phospholipase A2 homolog"/>
    <property type="match status" value="1"/>
</dbReference>
<dbReference type="Gene3D" id="1.20.90.10">
    <property type="entry name" value="Phospholipase A2 domain"/>
    <property type="match status" value="1"/>
</dbReference>
<dbReference type="InterPro" id="IPR001211">
    <property type="entry name" value="PLipase_A2"/>
</dbReference>
<dbReference type="InterPro" id="IPR033112">
    <property type="entry name" value="PLipase_A2_Asp_AS"/>
</dbReference>
<dbReference type="InterPro" id="IPR016090">
    <property type="entry name" value="PLipase_A2_dom"/>
</dbReference>
<dbReference type="InterPro" id="IPR036444">
    <property type="entry name" value="PLipase_A2_dom_sf"/>
</dbReference>
<dbReference type="InterPro" id="IPR033113">
    <property type="entry name" value="PLipase_A2_His_AS"/>
</dbReference>
<dbReference type="PANTHER" id="PTHR11716">
    <property type="entry name" value="PHOSPHOLIPASE A2 FAMILY MEMBER"/>
    <property type="match status" value="1"/>
</dbReference>
<dbReference type="PANTHER" id="PTHR11716:SF9">
    <property type="entry name" value="PHOSPHOLIPASE A2, MEMBRANE ASSOCIATED"/>
    <property type="match status" value="1"/>
</dbReference>
<dbReference type="Pfam" id="PF00068">
    <property type="entry name" value="Phospholip_A2_1"/>
    <property type="match status" value="1"/>
</dbReference>
<dbReference type="PRINTS" id="PR00389">
    <property type="entry name" value="PHPHLIPASEA2"/>
</dbReference>
<dbReference type="SMART" id="SM00085">
    <property type="entry name" value="PA2c"/>
    <property type="match status" value="1"/>
</dbReference>
<dbReference type="SUPFAM" id="SSF48619">
    <property type="entry name" value="Phospholipase A2, PLA2"/>
    <property type="match status" value="1"/>
</dbReference>
<dbReference type="PROSITE" id="PS00119">
    <property type="entry name" value="PA2_ASP"/>
    <property type="match status" value="1"/>
</dbReference>
<dbReference type="PROSITE" id="PS00118">
    <property type="entry name" value="PA2_HIS"/>
    <property type="match status" value="1"/>
</dbReference>